<organism>
    <name type="scientific">Trichoderma harzianum</name>
    <name type="common">Hypocrea lixii</name>
    <dbReference type="NCBI Taxonomy" id="5544"/>
    <lineage>
        <taxon>Eukaryota</taxon>
        <taxon>Fungi</taxon>
        <taxon>Dikarya</taxon>
        <taxon>Ascomycota</taxon>
        <taxon>Pezizomycotina</taxon>
        <taxon>Sordariomycetes</taxon>
        <taxon>Hypocreomycetidae</taxon>
        <taxon>Hypocreales</taxon>
        <taxon>Hypocreaceae</taxon>
        <taxon>Trichoderma</taxon>
    </lineage>
</organism>
<accession>P26875</accession>
<protein>
    <recommendedName>
        <fullName>Guanyl-specific ribonuclease Th1</fullName>
        <shortName>RNase Th1</shortName>
        <ecNumber>4.6.1.24</ecNumber>
    </recommendedName>
</protein>
<proteinExistence type="evidence at protein level"/>
<evidence type="ECO:0000250" key="1"/>
<evidence type="ECO:0000305" key="2"/>
<comment type="catalytic activity">
    <reaction>
        <text>[RNA] containing guanosine + H2O = an [RNA fragment]-3'-guanosine-3'-phosphate + a 5'-hydroxy-ribonucleotide-3'-[RNA fragment].</text>
        <dbReference type="EC" id="4.6.1.24"/>
    </reaction>
</comment>
<comment type="similarity">
    <text evidence="2">Belongs to the ribonuclease N1/T1 family.</text>
</comment>
<reference key="1">
    <citation type="journal article" date="1988" name="Bioorg. Khim.">
        <title>Isolation, analysis of amino acid sequence and crystallization of the extracellular ribonuclease Th1 from Trichoderma harzianum-01.</title>
        <authorList>
            <person name="Bezborodova S.I."/>
            <person name="Vasileva-Tonkova E.S."/>
            <person name="Polyakov K.M."/>
            <person name="Shlyapnikov S.V."/>
        </authorList>
    </citation>
    <scope>PROTEIN SEQUENCE</scope>
    <source>
        <strain>01</strain>
    </source>
</reference>
<name>RNT1_TRIHA</name>
<dbReference type="EC" id="4.6.1.24"/>
<dbReference type="PIR" id="JN0428">
    <property type="entry name" value="JN0428"/>
</dbReference>
<dbReference type="SMR" id="P26875"/>
<dbReference type="GO" id="GO:0016829">
    <property type="term" value="F:lyase activity"/>
    <property type="evidence" value="ECO:0007669"/>
    <property type="project" value="UniProtKB-KW"/>
</dbReference>
<dbReference type="GO" id="GO:0046589">
    <property type="term" value="F:ribonuclease T1 activity"/>
    <property type="evidence" value="ECO:0007669"/>
    <property type="project" value="UniProtKB-EC"/>
</dbReference>
<dbReference type="GO" id="GO:0003723">
    <property type="term" value="F:RNA binding"/>
    <property type="evidence" value="ECO:0007669"/>
    <property type="project" value="InterPro"/>
</dbReference>
<dbReference type="GO" id="GO:0004521">
    <property type="term" value="F:RNA endonuclease activity"/>
    <property type="evidence" value="ECO:0007669"/>
    <property type="project" value="InterPro"/>
</dbReference>
<dbReference type="Gene3D" id="3.10.450.30">
    <property type="entry name" value="Microbial ribonucleases"/>
    <property type="match status" value="1"/>
</dbReference>
<dbReference type="InterPro" id="IPR000026">
    <property type="entry name" value="N1-like"/>
</dbReference>
<dbReference type="InterPro" id="IPR016191">
    <property type="entry name" value="Ribonuclease/ribotoxin"/>
</dbReference>
<dbReference type="InterPro" id="IPR051386">
    <property type="entry name" value="Ribonuclease_N1/T1"/>
</dbReference>
<dbReference type="PANTHER" id="PTHR42104">
    <property type="entry name" value="EXTRACELLULAR GUANYL-SPECIFIC RIBONUCLEASE RNTA (AFU_ORTHOLOGUE AFUA_4G03230)"/>
    <property type="match status" value="1"/>
</dbReference>
<dbReference type="PANTHER" id="PTHR42104:SF1">
    <property type="entry name" value="EXTRACELLULAR GUANYL-SPECIFIC RIBONUCLEASE RNTA (AFU_ORTHOLOGUE AFUA_4G03230)"/>
    <property type="match status" value="1"/>
</dbReference>
<dbReference type="Pfam" id="PF00545">
    <property type="entry name" value="Ribonuclease"/>
    <property type="match status" value="1"/>
</dbReference>
<dbReference type="SUPFAM" id="SSF53933">
    <property type="entry name" value="Microbial ribonucleases"/>
    <property type="match status" value="1"/>
</dbReference>
<feature type="chain" id="PRO_0000137375" description="Guanyl-specific ribonuclease Th1">
    <location>
        <begin position="1"/>
        <end position="106"/>
    </location>
</feature>
<feature type="active site" evidence="1">
    <location>
        <position position="39"/>
    </location>
</feature>
<feature type="active site" description="Proton acceptor" evidence="1">
    <location>
        <position position="58"/>
    </location>
</feature>
<feature type="active site" description="Proton donor" evidence="1">
    <location>
        <position position="92"/>
    </location>
</feature>
<feature type="disulfide bond" evidence="1">
    <location>
        <begin position="5"/>
        <end position="103"/>
    </location>
</feature>
<feature type="disulfide bond" evidence="2">
    <location>
        <begin position="23"/>
        <end position="84"/>
    </location>
</feature>
<sequence>DTATCGKVFYSASAVSAASNAACNYVRAGSTAGGSTYPHVYNNYEGFRFKGLSKPFYEFPILSSGKTYTGGSPGADRVVINGQCSIAGIITHTGASGNAFVACGGT</sequence>
<keyword id="KW-0903">Direct protein sequencing</keyword>
<keyword id="KW-1015">Disulfide bond</keyword>
<keyword id="KW-0255">Endonuclease</keyword>
<keyword id="KW-0378">Hydrolase</keyword>
<keyword id="KW-0456">Lyase</keyword>
<keyword id="KW-0540">Nuclease</keyword>